<proteinExistence type="inferred from homology"/>
<reference key="1">
    <citation type="submission" date="2007-11" db="EMBL/GenBank/DDBJ databases">
        <title>Complete genome sequence of Clostridium phytofermentans ISDg.</title>
        <authorList>
            <person name="Leschine S.B."/>
            <person name="Warnick T.A."/>
            <person name="Blanchard J.L."/>
            <person name="Schnell D.J."/>
            <person name="Petit E.L."/>
            <person name="LaTouf W.G."/>
            <person name="Copeland A."/>
            <person name="Lucas S."/>
            <person name="Lapidus A."/>
            <person name="Barry K."/>
            <person name="Glavina del Rio T."/>
            <person name="Dalin E."/>
            <person name="Tice H."/>
            <person name="Pitluck S."/>
            <person name="Kiss H."/>
            <person name="Brettin T."/>
            <person name="Bruce D."/>
            <person name="Detter J.C."/>
            <person name="Han C."/>
            <person name="Kuske C."/>
            <person name="Schmutz J."/>
            <person name="Larimer F."/>
            <person name="Land M."/>
            <person name="Hauser L."/>
            <person name="Kyrpides N."/>
            <person name="Kim E.A."/>
            <person name="Richardson P."/>
        </authorList>
    </citation>
    <scope>NUCLEOTIDE SEQUENCE [LARGE SCALE GENOMIC DNA]</scope>
    <source>
        <strain>ATCC 700394 / DSM 18823 / ISDg</strain>
    </source>
</reference>
<evidence type="ECO:0000255" key="1">
    <source>
        <dbReference type="HAMAP-Rule" id="MF_00044"/>
    </source>
</evidence>
<comment type="function">
    <text evidence="1">Aspartyl-tRNA synthetase with relaxed tRNA specificity since it is able to aspartylate not only its cognate tRNA(Asp) but also tRNA(Asn). Reaction proceeds in two steps: L-aspartate is first activated by ATP to form Asp-AMP and then transferred to the acceptor end of tRNA(Asp/Asn).</text>
</comment>
<comment type="catalytic activity">
    <reaction evidence="1">
        <text>tRNA(Asx) + L-aspartate + ATP = L-aspartyl-tRNA(Asx) + AMP + diphosphate</text>
        <dbReference type="Rhea" id="RHEA:18349"/>
        <dbReference type="Rhea" id="RHEA-COMP:9710"/>
        <dbReference type="Rhea" id="RHEA-COMP:9711"/>
        <dbReference type="ChEBI" id="CHEBI:29991"/>
        <dbReference type="ChEBI" id="CHEBI:30616"/>
        <dbReference type="ChEBI" id="CHEBI:33019"/>
        <dbReference type="ChEBI" id="CHEBI:78442"/>
        <dbReference type="ChEBI" id="CHEBI:78516"/>
        <dbReference type="ChEBI" id="CHEBI:456215"/>
        <dbReference type="EC" id="6.1.1.23"/>
    </reaction>
</comment>
<comment type="subunit">
    <text evidence="1">Homodimer.</text>
</comment>
<comment type="subcellular location">
    <subcellularLocation>
        <location evidence="1">Cytoplasm</location>
    </subcellularLocation>
</comment>
<comment type="similarity">
    <text evidence="1">Belongs to the class-II aminoacyl-tRNA synthetase family. Type 1 subfamily.</text>
</comment>
<gene>
    <name evidence="1" type="primary">aspS</name>
    <name type="ordered locus">Cphy_0553</name>
</gene>
<dbReference type="EC" id="6.1.1.23" evidence="1"/>
<dbReference type="EMBL" id="CP000885">
    <property type="protein sequence ID" value="ABX40940.1"/>
    <property type="molecule type" value="Genomic_DNA"/>
</dbReference>
<dbReference type="RefSeq" id="WP_012198584.1">
    <property type="nucleotide sequence ID" value="NC_010001.1"/>
</dbReference>
<dbReference type="SMR" id="A9KIA6"/>
<dbReference type="STRING" id="357809.Cphy_0553"/>
<dbReference type="KEGG" id="cpy:Cphy_0553"/>
<dbReference type="eggNOG" id="COG0173">
    <property type="taxonomic scope" value="Bacteria"/>
</dbReference>
<dbReference type="HOGENOM" id="CLU_014330_3_2_9"/>
<dbReference type="OrthoDB" id="9802326at2"/>
<dbReference type="Proteomes" id="UP000000370">
    <property type="component" value="Chromosome"/>
</dbReference>
<dbReference type="GO" id="GO:0005737">
    <property type="term" value="C:cytoplasm"/>
    <property type="evidence" value="ECO:0007669"/>
    <property type="project" value="UniProtKB-SubCell"/>
</dbReference>
<dbReference type="GO" id="GO:0004815">
    <property type="term" value="F:aspartate-tRNA ligase activity"/>
    <property type="evidence" value="ECO:0007669"/>
    <property type="project" value="UniProtKB-UniRule"/>
</dbReference>
<dbReference type="GO" id="GO:0050560">
    <property type="term" value="F:aspartate-tRNA(Asn) ligase activity"/>
    <property type="evidence" value="ECO:0007669"/>
    <property type="project" value="UniProtKB-EC"/>
</dbReference>
<dbReference type="GO" id="GO:0005524">
    <property type="term" value="F:ATP binding"/>
    <property type="evidence" value="ECO:0007669"/>
    <property type="project" value="UniProtKB-UniRule"/>
</dbReference>
<dbReference type="GO" id="GO:0140096">
    <property type="term" value="F:catalytic activity, acting on a protein"/>
    <property type="evidence" value="ECO:0007669"/>
    <property type="project" value="UniProtKB-ARBA"/>
</dbReference>
<dbReference type="GO" id="GO:0003676">
    <property type="term" value="F:nucleic acid binding"/>
    <property type="evidence" value="ECO:0007669"/>
    <property type="project" value="InterPro"/>
</dbReference>
<dbReference type="GO" id="GO:0016740">
    <property type="term" value="F:transferase activity"/>
    <property type="evidence" value="ECO:0007669"/>
    <property type="project" value="UniProtKB-ARBA"/>
</dbReference>
<dbReference type="GO" id="GO:0006422">
    <property type="term" value="P:aspartyl-tRNA aminoacylation"/>
    <property type="evidence" value="ECO:0007669"/>
    <property type="project" value="UniProtKB-UniRule"/>
</dbReference>
<dbReference type="CDD" id="cd00777">
    <property type="entry name" value="AspRS_core"/>
    <property type="match status" value="1"/>
</dbReference>
<dbReference type="CDD" id="cd04317">
    <property type="entry name" value="EcAspRS_like_N"/>
    <property type="match status" value="1"/>
</dbReference>
<dbReference type="Gene3D" id="3.30.930.10">
    <property type="entry name" value="Bira Bifunctional Protein, Domain 2"/>
    <property type="match status" value="1"/>
</dbReference>
<dbReference type="Gene3D" id="3.30.1360.30">
    <property type="entry name" value="GAD-like domain"/>
    <property type="match status" value="1"/>
</dbReference>
<dbReference type="Gene3D" id="2.40.50.140">
    <property type="entry name" value="Nucleic acid-binding proteins"/>
    <property type="match status" value="1"/>
</dbReference>
<dbReference type="HAMAP" id="MF_00044">
    <property type="entry name" value="Asp_tRNA_synth_type1"/>
    <property type="match status" value="1"/>
</dbReference>
<dbReference type="InterPro" id="IPR004364">
    <property type="entry name" value="Aa-tRNA-synt_II"/>
</dbReference>
<dbReference type="InterPro" id="IPR006195">
    <property type="entry name" value="aa-tRNA-synth_II"/>
</dbReference>
<dbReference type="InterPro" id="IPR045864">
    <property type="entry name" value="aa-tRNA-synth_II/BPL/LPL"/>
</dbReference>
<dbReference type="InterPro" id="IPR004524">
    <property type="entry name" value="Asp-tRNA-ligase_1"/>
</dbReference>
<dbReference type="InterPro" id="IPR047089">
    <property type="entry name" value="Asp-tRNA-ligase_1_N"/>
</dbReference>
<dbReference type="InterPro" id="IPR002312">
    <property type="entry name" value="Asp/Asn-tRNA-synth_IIb"/>
</dbReference>
<dbReference type="InterPro" id="IPR047090">
    <property type="entry name" value="AspRS_core"/>
</dbReference>
<dbReference type="InterPro" id="IPR004115">
    <property type="entry name" value="GAD-like_sf"/>
</dbReference>
<dbReference type="InterPro" id="IPR029351">
    <property type="entry name" value="GAD_dom"/>
</dbReference>
<dbReference type="InterPro" id="IPR012340">
    <property type="entry name" value="NA-bd_OB-fold"/>
</dbReference>
<dbReference type="InterPro" id="IPR004365">
    <property type="entry name" value="NA-bd_OB_tRNA"/>
</dbReference>
<dbReference type="NCBIfam" id="TIGR00459">
    <property type="entry name" value="aspS_bact"/>
    <property type="match status" value="1"/>
</dbReference>
<dbReference type="NCBIfam" id="NF001750">
    <property type="entry name" value="PRK00476.1"/>
    <property type="match status" value="1"/>
</dbReference>
<dbReference type="PANTHER" id="PTHR22594:SF5">
    <property type="entry name" value="ASPARTATE--TRNA LIGASE, MITOCHONDRIAL"/>
    <property type="match status" value="1"/>
</dbReference>
<dbReference type="PANTHER" id="PTHR22594">
    <property type="entry name" value="ASPARTYL/LYSYL-TRNA SYNTHETASE"/>
    <property type="match status" value="1"/>
</dbReference>
<dbReference type="Pfam" id="PF02938">
    <property type="entry name" value="GAD"/>
    <property type="match status" value="1"/>
</dbReference>
<dbReference type="Pfam" id="PF00152">
    <property type="entry name" value="tRNA-synt_2"/>
    <property type="match status" value="1"/>
</dbReference>
<dbReference type="Pfam" id="PF01336">
    <property type="entry name" value="tRNA_anti-codon"/>
    <property type="match status" value="1"/>
</dbReference>
<dbReference type="PRINTS" id="PR01042">
    <property type="entry name" value="TRNASYNTHASP"/>
</dbReference>
<dbReference type="SUPFAM" id="SSF55681">
    <property type="entry name" value="Class II aaRS and biotin synthetases"/>
    <property type="match status" value="1"/>
</dbReference>
<dbReference type="SUPFAM" id="SSF55261">
    <property type="entry name" value="GAD domain-like"/>
    <property type="match status" value="1"/>
</dbReference>
<dbReference type="SUPFAM" id="SSF50249">
    <property type="entry name" value="Nucleic acid-binding proteins"/>
    <property type="match status" value="1"/>
</dbReference>
<dbReference type="PROSITE" id="PS50862">
    <property type="entry name" value="AA_TRNA_LIGASE_II"/>
    <property type="match status" value="1"/>
</dbReference>
<sequence length="598" mass="67521">MAESMKGLHRTHRCTELSNSNVGEIVTVMGWVQKSRNKGGIIFVDLRDRSGLLQIIFEEGDIGTEMFEKASKLRSEFVVAVVGKVETRSGAVNENLLTGTIEVRATELRILSESETPPFPIEEGSKTKEELRLKYRYLDLRRPDLVRNLMLRSKVATLTRQFLSDEGFLEIETPMLTKSTPEGARDYLVPSRVHPGNFYALPQSPQIFKQLLMVSGYDRYFQIVKCFRDEDLRADRQPEFTQIDMELSFVDVDDVISVNERLLQKMFKESIGIDVSLPIQRMTWREAMDRYGSDKPDTRFGMELKNVSELVKDCGFAVFTGALENGGSVRGINANGQGEMPRKKIDALIEFAKGYGAKGLAYLSINEDGTYKSSFSKFMTEEELSALVAAMEAKPGDLLFFAADKDKVVFDVLGNLRLEIARNLELLDKNTYNFLWVTEFPLLEYSEEEGRYTAMHHPFTMPMDEDLPLLETDPGKVRAKAYDIVLNGTEVGGGSVRIFQNNVQEKMFEVLGFTKEEAYERFGFLLNAFKYGVPPHAGLAYGLDRLVMLMAKEDSIRDVIAFPKVKDASCLLTDAPNVVDDKQLEELSIALAKKATEE</sequence>
<keyword id="KW-0030">Aminoacyl-tRNA synthetase</keyword>
<keyword id="KW-0067">ATP-binding</keyword>
<keyword id="KW-0963">Cytoplasm</keyword>
<keyword id="KW-0436">Ligase</keyword>
<keyword id="KW-0547">Nucleotide-binding</keyword>
<keyword id="KW-0648">Protein biosynthesis</keyword>
<keyword id="KW-1185">Reference proteome</keyword>
<name>SYDND_LACP7</name>
<protein>
    <recommendedName>
        <fullName evidence="1">Aspartate--tRNA(Asp/Asn) ligase</fullName>
        <ecNumber evidence="1">6.1.1.23</ecNumber>
    </recommendedName>
    <alternativeName>
        <fullName evidence="1">Aspartyl-tRNA synthetase</fullName>
        <shortName evidence="1">AspRS</shortName>
    </alternativeName>
    <alternativeName>
        <fullName evidence="1">Non-discriminating aspartyl-tRNA synthetase</fullName>
        <shortName evidence="1">ND-AspRS</shortName>
    </alternativeName>
</protein>
<feature type="chain" id="PRO_1000074697" description="Aspartate--tRNA(Asp/Asn) ligase">
    <location>
        <begin position="1"/>
        <end position="598"/>
    </location>
</feature>
<feature type="region of interest" description="Aspartate" evidence="1">
    <location>
        <begin position="206"/>
        <end position="209"/>
    </location>
</feature>
<feature type="binding site" evidence="1">
    <location>
        <position position="182"/>
    </location>
    <ligand>
        <name>L-aspartate</name>
        <dbReference type="ChEBI" id="CHEBI:29991"/>
    </ligand>
</feature>
<feature type="binding site" evidence="1">
    <location>
        <begin position="228"/>
        <end position="230"/>
    </location>
    <ligand>
        <name>ATP</name>
        <dbReference type="ChEBI" id="CHEBI:30616"/>
    </ligand>
</feature>
<feature type="binding site" evidence="1">
    <location>
        <position position="228"/>
    </location>
    <ligand>
        <name>L-aspartate</name>
        <dbReference type="ChEBI" id="CHEBI:29991"/>
    </ligand>
</feature>
<feature type="binding site" evidence="1">
    <location>
        <position position="237"/>
    </location>
    <ligand>
        <name>ATP</name>
        <dbReference type="ChEBI" id="CHEBI:30616"/>
    </ligand>
</feature>
<feature type="binding site" evidence="1">
    <location>
        <position position="456"/>
    </location>
    <ligand>
        <name>L-aspartate</name>
        <dbReference type="ChEBI" id="CHEBI:29991"/>
    </ligand>
</feature>
<feature type="binding site" evidence="1">
    <location>
        <position position="490"/>
    </location>
    <ligand>
        <name>ATP</name>
        <dbReference type="ChEBI" id="CHEBI:30616"/>
    </ligand>
</feature>
<feature type="binding site" evidence="1">
    <location>
        <position position="497"/>
    </location>
    <ligand>
        <name>L-aspartate</name>
        <dbReference type="ChEBI" id="CHEBI:29991"/>
    </ligand>
</feature>
<feature type="binding site" evidence="1">
    <location>
        <begin position="542"/>
        <end position="545"/>
    </location>
    <ligand>
        <name>ATP</name>
        <dbReference type="ChEBI" id="CHEBI:30616"/>
    </ligand>
</feature>
<feature type="site" description="Important for tRNA non-discrimination" evidence="1">
    <location>
        <position position="90"/>
    </location>
</feature>
<organism>
    <name type="scientific">Lachnoclostridium phytofermentans (strain ATCC 700394 / DSM 18823 / ISDg)</name>
    <name type="common">Clostridium phytofermentans</name>
    <dbReference type="NCBI Taxonomy" id="357809"/>
    <lineage>
        <taxon>Bacteria</taxon>
        <taxon>Bacillati</taxon>
        <taxon>Bacillota</taxon>
        <taxon>Clostridia</taxon>
        <taxon>Lachnospirales</taxon>
        <taxon>Lachnospiraceae</taxon>
    </lineage>
</organism>
<accession>A9KIA6</accession>